<evidence type="ECO:0000255" key="1">
    <source>
        <dbReference type="HAMAP-Rule" id="MF_00175"/>
    </source>
</evidence>
<evidence type="ECO:0000255" key="2">
    <source>
        <dbReference type="PROSITE-ProRule" id="PRU01250"/>
    </source>
</evidence>
<sequence length="419" mass="46199">MFKFNDEKGQLKCSFCGKTQTQVRKLVAGPGVYICDECIELCTEIVQEELAKDEEVEFKDVPKPVEIREILDEYVIGQDNAKKALAVAVYNHYKRINSNSKIDDVELAKSNIALIGPTGSGKTLLAQTLARILNVPFAIADATSLTEAGYVGEDVENILLKLIQAADYDVEKAEKGIIYIDEIDKVARKSENPSITRDVSGEGVQQALLKILEGTVASVPPQGGRKHPHQEFIQIDTTNILFICGGAFDGIEPIIKRRLGEKVIGFGSEKKNADVNEKHVLSHVLPEDLLRFGLIPEFIGRLPVIANLEPLDEDALVDILTKPKNALVKQFQKLLELDDVELEFEEGALIEIAKKAIERKTGARGLRSIIEGLMLEVMFELPSRKDIEKCILTKETVADNAAPKLVLQDGTVLDTKTSA</sequence>
<accession>Q633X2</accession>
<gene>
    <name evidence="1" type="primary">clpX</name>
    <name type="ordered locus">BCE33L4216</name>
</gene>
<keyword id="KW-0067">ATP-binding</keyword>
<keyword id="KW-0143">Chaperone</keyword>
<keyword id="KW-0479">Metal-binding</keyword>
<keyword id="KW-0547">Nucleotide-binding</keyword>
<keyword id="KW-0862">Zinc</keyword>
<protein>
    <recommendedName>
        <fullName evidence="1">ATP-dependent Clp protease ATP-binding subunit ClpX</fullName>
    </recommendedName>
</protein>
<organism>
    <name type="scientific">Bacillus cereus (strain ZK / E33L)</name>
    <dbReference type="NCBI Taxonomy" id="288681"/>
    <lineage>
        <taxon>Bacteria</taxon>
        <taxon>Bacillati</taxon>
        <taxon>Bacillota</taxon>
        <taxon>Bacilli</taxon>
        <taxon>Bacillales</taxon>
        <taxon>Bacillaceae</taxon>
        <taxon>Bacillus</taxon>
        <taxon>Bacillus cereus group</taxon>
    </lineage>
</organism>
<proteinExistence type="inferred from homology"/>
<feature type="chain" id="PRO_0000160308" description="ATP-dependent Clp protease ATP-binding subunit ClpX">
    <location>
        <begin position="1"/>
        <end position="419"/>
    </location>
</feature>
<feature type="domain" description="ClpX-type ZB" evidence="2">
    <location>
        <begin position="1"/>
        <end position="54"/>
    </location>
</feature>
<feature type="binding site" evidence="2">
    <location>
        <position position="13"/>
    </location>
    <ligand>
        <name>Zn(2+)</name>
        <dbReference type="ChEBI" id="CHEBI:29105"/>
    </ligand>
</feature>
<feature type="binding site" evidence="2">
    <location>
        <position position="16"/>
    </location>
    <ligand>
        <name>Zn(2+)</name>
        <dbReference type="ChEBI" id="CHEBI:29105"/>
    </ligand>
</feature>
<feature type="binding site" evidence="2">
    <location>
        <position position="35"/>
    </location>
    <ligand>
        <name>Zn(2+)</name>
        <dbReference type="ChEBI" id="CHEBI:29105"/>
    </ligand>
</feature>
<feature type="binding site" evidence="2">
    <location>
        <position position="38"/>
    </location>
    <ligand>
        <name>Zn(2+)</name>
        <dbReference type="ChEBI" id="CHEBI:29105"/>
    </ligand>
</feature>
<feature type="binding site" evidence="1">
    <location>
        <begin position="117"/>
        <end position="124"/>
    </location>
    <ligand>
        <name>ATP</name>
        <dbReference type="ChEBI" id="CHEBI:30616"/>
    </ligand>
</feature>
<reference key="1">
    <citation type="journal article" date="2006" name="J. Bacteriol.">
        <title>Pathogenomic sequence analysis of Bacillus cereus and Bacillus thuringiensis isolates closely related to Bacillus anthracis.</title>
        <authorList>
            <person name="Han C.S."/>
            <person name="Xie G."/>
            <person name="Challacombe J.F."/>
            <person name="Altherr M.R."/>
            <person name="Bhotika S.S."/>
            <person name="Bruce D."/>
            <person name="Campbell C.S."/>
            <person name="Campbell M.L."/>
            <person name="Chen J."/>
            <person name="Chertkov O."/>
            <person name="Cleland C."/>
            <person name="Dimitrijevic M."/>
            <person name="Doggett N.A."/>
            <person name="Fawcett J.J."/>
            <person name="Glavina T."/>
            <person name="Goodwin L.A."/>
            <person name="Hill K.K."/>
            <person name="Hitchcock P."/>
            <person name="Jackson P.J."/>
            <person name="Keim P."/>
            <person name="Kewalramani A.R."/>
            <person name="Longmire J."/>
            <person name="Lucas S."/>
            <person name="Malfatti S."/>
            <person name="McMurry K."/>
            <person name="Meincke L.J."/>
            <person name="Misra M."/>
            <person name="Moseman B.L."/>
            <person name="Mundt M."/>
            <person name="Munk A.C."/>
            <person name="Okinaka R.T."/>
            <person name="Parson-Quintana B."/>
            <person name="Reilly L.P."/>
            <person name="Richardson P."/>
            <person name="Robinson D.L."/>
            <person name="Rubin E."/>
            <person name="Saunders E."/>
            <person name="Tapia R."/>
            <person name="Tesmer J.G."/>
            <person name="Thayer N."/>
            <person name="Thompson L.S."/>
            <person name="Tice H."/>
            <person name="Ticknor L.O."/>
            <person name="Wills P.L."/>
            <person name="Brettin T.S."/>
            <person name="Gilna P."/>
        </authorList>
    </citation>
    <scope>NUCLEOTIDE SEQUENCE [LARGE SCALE GENOMIC DNA]</scope>
    <source>
        <strain>ZK / E33L</strain>
    </source>
</reference>
<comment type="function">
    <text evidence="1">ATP-dependent specificity component of the Clp protease. It directs the protease to specific substrates. Can perform chaperone functions in the absence of ClpP.</text>
</comment>
<comment type="subunit">
    <text evidence="1">Component of the ClpX-ClpP complex. Forms a hexameric ring that, in the presence of ATP, binds to fourteen ClpP subunits assembled into a disk-like structure with a central cavity, resembling the structure of eukaryotic proteasomes.</text>
</comment>
<comment type="similarity">
    <text evidence="1">Belongs to the ClpX chaperone family.</text>
</comment>
<dbReference type="EMBL" id="CP000001">
    <property type="protein sequence ID" value="AAU16053.1"/>
    <property type="molecule type" value="Genomic_DNA"/>
</dbReference>
<dbReference type="RefSeq" id="WP_000472282.1">
    <property type="nucleotide sequence ID" value="NZ_CP009968.1"/>
</dbReference>
<dbReference type="SMR" id="Q633X2"/>
<dbReference type="GeneID" id="75087607"/>
<dbReference type="KEGG" id="bcz:BCE33L4216"/>
<dbReference type="PATRIC" id="fig|288681.22.peg.1167"/>
<dbReference type="Proteomes" id="UP000002612">
    <property type="component" value="Chromosome"/>
</dbReference>
<dbReference type="GO" id="GO:0009376">
    <property type="term" value="C:HslUV protease complex"/>
    <property type="evidence" value="ECO:0007669"/>
    <property type="project" value="TreeGrafter"/>
</dbReference>
<dbReference type="GO" id="GO:0005524">
    <property type="term" value="F:ATP binding"/>
    <property type="evidence" value="ECO:0007669"/>
    <property type="project" value="UniProtKB-UniRule"/>
</dbReference>
<dbReference type="GO" id="GO:0016887">
    <property type="term" value="F:ATP hydrolysis activity"/>
    <property type="evidence" value="ECO:0007669"/>
    <property type="project" value="InterPro"/>
</dbReference>
<dbReference type="GO" id="GO:0140662">
    <property type="term" value="F:ATP-dependent protein folding chaperone"/>
    <property type="evidence" value="ECO:0007669"/>
    <property type="project" value="InterPro"/>
</dbReference>
<dbReference type="GO" id="GO:0046983">
    <property type="term" value="F:protein dimerization activity"/>
    <property type="evidence" value="ECO:0007669"/>
    <property type="project" value="InterPro"/>
</dbReference>
<dbReference type="GO" id="GO:0051082">
    <property type="term" value="F:unfolded protein binding"/>
    <property type="evidence" value="ECO:0007669"/>
    <property type="project" value="UniProtKB-UniRule"/>
</dbReference>
<dbReference type="GO" id="GO:0008270">
    <property type="term" value="F:zinc ion binding"/>
    <property type="evidence" value="ECO:0007669"/>
    <property type="project" value="InterPro"/>
</dbReference>
<dbReference type="GO" id="GO:0051301">
    <property type="term" value="P:cell division"/>
    <property type="evidence" value="ECO:0007669"/>
    <property type="project" value="TreeGrafter"/>
</dbReference>
<dbReference type="GO" id="GO:0051603">
    <property type="term" value="P:proteolysis involved in protein catabolic process"/>
    <property type="evidence" value="ECO:0007669"/>
    <property type="project" value="TreeGrafter"/>
</dbReference>
<dbReference type="CDD" id="cd19497">
    <property type="entry name" value="RecA-like_ClpX"/>
    <property type="match status" value="1"/>
</dbReference>
<dbReference type="FunFam" id="1.10.8.60:FF:000002">
    <property type="entry name" value="ATP-dependent Clp protease ATP-binding subunit ClpX"/>
    <property type="match status" value="1"/>
</dbReference>
<dbReference type="FunFam" id="3.40.50.300:FF:000005">
    <property type="entry name" value="ATP-dependent Clp protease ATP-binding subunit ClpX"/>
    <property type="match status" value="1"/>
</dbReference>
<dbReference type="Gene3D" id="1.10.8.60">
    <property type="match status" value="1"/>
</dbReference>
<dbReference type="Gene3D" id="6.20.220.10">
    <property type="entry name" value="ClpX chaperone, C4-type zinc finger domain"/>
    <property type="match status" value="1"/>
</dbReference>
<dbReference type="Gene3D" id="3.40.50.300">
    <property type="entry name" value="P-loop containing nucleotide triphosphate hydrolases"/>
    <property type="match status" value="1"/>
</dbReference>
<dbReference type="HAMAP" id="MF_00175">
    <property type="entry name" value="ClpX"/>
    <property type="match status" value="1"/>
</dbReference>
<dbReference type="InterPro" id="IPR003593">
    <property type="entry name" value="AAA+_ATPase"/>
</dbReference>
<dbReference type="InterPro" id="IPR050052">
    <property type="entry name" value="ATP-dep_Clp_protease_ClpX"/>
</dbReference>
<dbReference type="InterPro" id="IPR003959">
    <property type="entry name" value="ATPase_AAA_core"/>
</dbReference>
<dbReference type="InterPro" id="IPR019489">
    <property type="entry name" value="Clp_ATPase_C"/>
</dbReference>
<dbReference type="InterPro" id="IPR004487">
    <property type="entry name" value="Clp_protease_ATP-bd_su_ClpX"/>
</dbReference>
<dbReference type="InterPro" id="IPR046425">
    <property type="entry name" value="ClpX_bact"/>
</dbReference>
<dbReference type="InterPro" id="IPR027417">
    <property type="entry name" value="P-loop_NTPase"/>
</dbReference>
<dbReference type="InterPro" id="IPR010603">
    <property type="entry name" value="Znf_CppX_C4"/>
</dbReference>
<dbReference type="InterPro" id="IPR038366">
    <property type="entry name" value="Znf_CppX_C4_sf"/>
</dbReference>
<dbReference type="NCBIfam" id="TIGR00382">
    <property type="entry name" value="clpX"/>
    <property type="match status" value="1"/>
</dbReference>
<dbReference type="NCBIfam" id="NF003745">
    <property type="entry name" value="PRK05342.1"/>
    <property type="match status" value="1"/>
</dbReference>
<dbReference type="PANTHER" id="PTHR48102:SF7">
    <property type="entry name" value="ATP-DEPENDENT CLP PROTEASE ATP-BINDING SUBUNIT CLPX-LIKE, MITOCHONDRIAL"/>
    <property type="match status" value="1"/>
</dbReference>
<dbReference type="PANTHER" id="PTHR48102">
    <property type="entry name" value="ATP-DEPENDENT CLP PROTEASE ATP-BINDING SUBUNIT CLPX-LIKE, MITOCHONDRIAL-RELATED"/>
    <property type="match status" value="1"/>
</dbReference>
<dbReference type="Pfam" id="PF07724">
    <property type="entry name" value="AAA_2"/>
    <property type="match status" value="1"/>
</dbReference>
<dbReference type="Pfam" id="PF10431">
    <property type="entry name" value="ClpB_D2-small"/>
    <property type="match status" value="1"/>
</dbReference>
<dbReference type="Pfam" id="PF06689">
    <property type="entry name" value="zf-C4_ClpX"/>
    <property type="match status" value="1"/>
</dbReference>
<dbReference type="SMART" id="SM00382">
    <property type="entry name" value="AAA"/>
    <property type="match status" value="1"/>
</dbReference>
<dbReference type="SMART" id="SM01086">
    <property type="entry name" value="ClpB_D2-small"/>
    <property type="match status" value="1"/>
</dbReference>
<dbReference type="SMART" id="SM00994">
    <property type="entry name" value="zf-C4_ClpX"/>
    <property type="match status" value="1"/>
</dbReference>
<dbReference type="SUPFAM" id="SSF57716">
    <property type="entry name" value="Glucocorticoid receptor-like (DNA-binding domain)"/>
    <property type="match status" value="1"/>
</dbReference>
<dbReference type="SUPFAM" id="SSF52540">
    <property type="entry name" value="P-loop containing nucleoside triphosphate hydrolases"/>
    <property type="match status" value="1"/>
</dbReference>
<dbReference type="PROSITE" id="PS51902">
    <property type="entry name" value="CLPX_ZB"/>
    <property type="match status" value="1"/>
</dbReference>
<name>CLPX_BACCZ</name>